<keyword id="KW-1185">Reference proteome</keyword>
<keyword id="KW-0687">Ribonucleoprotein</keyword>
<keyword id="KW-0689">Ribosomal protein</keyword>
<reference key="1">
    <citation type="journal article" date="2001" name="Proc. Natl. Acad. Sci. U.S.A.">
        <title>Complete genome sequence of Caulobacter crescentus.</title>
        <authorList>
            <person name="Nierman W.C."/>
            <person name="Feldblyum T.V."/>
            <person name="Laub M.T."/>
            <person name="Paulsen I.T."/>
            <person name="Nelson K.E."/>
            <person name="Eisen J.A."/>
            <person name="Heidelberg J.F."/>
            <person name="Alley M.R.K."/>
            <person name="Ohta N."/>
            <person name="Maddock J.R."/>
            <person name="Potocka I."/>
            <person name="Nelson W.C."/>
            <person name="Newton A."/>
            <person name="Stephens C."/>
            <person name="Phadke N.D."/>
            <person name="Ely B."/>
            <person name="DeBoy R.T."/>
            <person name="Dodson R.J."/>
            <person name="Durkin A.S."/>
            <person name="Gwinn M.L."/>
            <person name="Haft D.H."/>
            <person name="Kolonay J.F."/>
            <person name="Smit J."/>
            <person name="Craven M.B."/>
            <person name="Khouri H.M."/>
            <person name="Shetty J."/>
            <person name="Berry K.J."/>
            <person name="Utterback T.R."/>
            <person name="Tran K."/>
            <person name="Wolf A.M."/>
            <person name="Vamathevan J.J."/>
            <person name="Ermolaeva M.D."/>
            <person name="White O."/>
            <person name="Salzberg S.L."/>
            <person name="Venter J.C."/>
            <person name="Shapiro L."/>
            <person name="Fraser C.M."/>
        </authorList>
    </citation>
    <scope>NUCLEOTIDE SEQUENCE [LARGE SCALE GENOMIC DNA]</scope>
    <source>
        <strain>ATCC 19089 / CIP 103742 / CB 15</strain>
    </source>
</reference>
<dbReference type="EMBL" id="AE005673">
    <property type="protein sequence ID" value="AAK23697.1"/>
    <property type="molecule type" value="Genomic_DNA"/>
</dbReference>
<dbReference type="PIR" id="E87462">
    <property type="entry name" value="E87462"/>
</dbReference>
<dbReference type="RefSeq" id="NP_420529.1">
    <property type="nucleotide sequence ID" value="NC_002696.2"/>
</dbReference>
<dbReference type="RefSeq" id="WP_010919589.1">
    <property type="nucleotide sequence ID" value="NC_002696.2"/>
</dbReference>
<dbReference type="SMR" id="Q9A7K2"/>
<dbReference type="STRING" id="190650.CC_1721"/>
<dbReference type="EnsemblBacteria" id="AAK23697">
    <property type="protein sequence ID" value="AAK23697"/>
    <property type="gene ID" value="CC_1721"/>
</dbReference>
<dbReference type="KEGG" id="ccr:CC_1721"/>
<dbReference type="PATRIC" id="fig|190650.5.peg.1745"/>
<dbReference type="eggNOG" id="COG0333">
    <property type="taxonomic scope" value="Bacteria"/>
</dbReference>
<dbReference type="HOGENOM" id="CLU_129084_2_2_5"/>
<dbReference type="BioCyc" id="CAULO:CC1721-MONOMER"/>
<dbReference type="Proteomes" id="UP000001816">
    <property type="component" value="Chromosome"/>
</dbReference>
<dbReference type="GO" id="GO:0015934">
    <property type="term" value="C:large ribosomal subunit"/>
    <property type="evidence" value="ECO:0007669"/>
    <property type="project" value="InterPro"/>
</dbReference>
<dbReference type="GO" id="GO:0003735">
    <property type="term" value="F:structural constituent of ribosome"/>
    <property type="evidence" value="ECO:0007669"/>
    <property type="project" value="InterPro"/>
</dbReference>
<dbReference type="GO" id="GO:0006412">
    <property type="term" value="P:translation"/>
    <property type="evidence" value="ECO:0007669"/>
    <property type="project" value="UniProtKB-UniRule"/>
</dbReference>
<dbReference type="Gene3D" id="1.20.5.640">
    <property type="entry name" value="Single helix bin"/>
    <property type="match status" value="1"/>
</dbReference>
<dbReference type="HAMAP" id="MF_00340">
    <property type="entry name" value="Ribosomal_bL32"/>
    <property type="match status" value="1"/>
</dbReference>
<dbReference type="InterPro" id="IPR002677">
    <property type="entry name" value="Ribosomal_bL32"/>
</dbReference>
<dbReference type="InterPro" id="IPR044957">
    <property type="entry name" value="Ribosomal_bL32_bact"/>
</dbReference>
<dbReference type="InterPro" id="IPR011332">
    <property type="entry name" value="Ribosomal_zn-bd"/>
</dbReference>
<dbReference type="NCBIfam" id="TIGR01031">
    <property type="entry name" value="rpmF_bact"/>
    <property type="match status" value="1"/>
</dbReference>
<dbReference type="PANTHER" id="PTHR35534">
    <property type="entry name" value="50S RIBOSOMAL PROTEIN L32"/>
    <property type="match status" value="1"/>
</dbReference>
<dbReference type="PANTHER" id="PTHR35534:SF1">
    <property type="entry name" value="LARGE RIBOSOMAL SUBUNIT PROTEIN BL32"/>
    <property type="match status" value="1"/>
</dbReference>
<dbReference type="Pfam" id="PF01783">
    <property type="entry name" value="Ribosomal_L32p"/>
    <property type="match status" value="1"/>
</dbReference>
<dbReference type="SUPFAM" id="SSF57829">
    <property type="entry name" value="Zn-binding ribosomal proteins"/>
    <property type="match status" value="1"/>
</dbReference>
<evidence type="ECO:0000255" key="1">
    <source>
        <dbReference type="HAMAP-Rule" id="MF_00340"/>
    </source>
</evidence>
<evidence type="ECO:0000256" key="2">
    <source>
        <dbReference type="SAM" id="MobiDB-lite"/>
    </source>
</evidence>
<evidence type="ECO:0000305" key="3"/>
<accession>Q9A7K2</accession>
<protein>
    <recommendedName>
        <fullName evidence="1">Large ribosomal subunit protein bL32</fullName>
    </recommendedName>
    <alternativeName>
        <fullName evidence="3">50S ribosomal protein L32</fullName>
    </alternativeName>
</protein>
<feature type="chain" id="PRO_0000172324" description="Large ribosomal subunit protein bL32">
    <location>
        <begin position="1"/>
        <end position="60"/>
    </location>
</feature>
<feature type="region of interest" description="Disordered" evidence="2">
    <location>
        <begin position="1"/>
        <end position="60"/>
    </location>
</feature>
<feature type="compositionally biased region" description="Basic residues" evidence="2">
    <location>
        <begin position="1"/>
        <end position="20"/>
    </location>
</feature>
<feature type="compositionally biased region" description="Basic and acidic residues" evidence="2">
    <location>
        <begin position="28"/>
        <end position="44"/>
    </location>
</feature>
<proteinExistence type="inferred from homology"/>
<comment type="similarity">
    <text evidence="1">Belongs to the bacterial ribosomal protein bL32 family.</text>
</comment>
<gene>
    <name evidence="1" type="primary">rpmF</name>
    <name type="ordered locus">CC_1721</name>
</gene>
<sequence length="60" mass="6911">MAVPKRKTSPSRRNMRRSHHALGANSFIEDKDTGELRRPHHVDLKTGMYNGKQILTPKED</sequence>
<organism>
    <name type="scientific">Caulobacter vibrioides (strain ATCC 19089 / CIP 103742 / CB 15)</name>
    <name type="common">Caulobacter crescentus</name>
    <dbReference type="NCBI Taxonomy" id="190650"/>
    <lineage>
        <taxon>Bacteria</taxon>
        <taxon>Pseudomonadati</taxon>
        <taxon>Pseudomonadota</taxon>
        <taxon>Alphaproteobacteria</taxon>
        <taxon>Caulobacterales</taxon>
        <taxon>Caulobacteraceae</taxon>
        <taxon>Caulobacter</taxon>
    </lineage>
</organism>
<name>RL32_CAUVC</name>